<accession>B1VKI2</accession>
<organism>
    <name type="scientific">Cryptomeria japonica</name>
    <name type="common">Japanese cedar</name>
    <name type="synonym">Cupressus japonica</name>
    <dbReference type="NCBI Taxonomy" id="3369"/>
    <lineage>
        <taxon>Eukaryota</taxon>
        <taxon>Viridiplantae</taxon>
        <taxon>Streptophyta</taxon>
        <taxon>Embryophyta</taxon>
        <taxon>Tracheophyta</taxon>
        <taxon>Spermatophyta</taxon>
        <taxon>Pinopsida</taxon>
        <taxon>Pinidae</taxon>
        <taxon>Conifers II</taxon>
        <taxon>Cupressales</taxon>
        <taxon>Cupressaceae</taxon>
        <taxon>Cryptomeria</taxon>
    </lineage>
</organism>
<evidence type="ECO:0000255" key="1">
    <source>
        <dbReference type="HAMAP-Rule" id="MF_01316"/>
    </source>
</evidence>
<sequence length="36" mass="4167">MLTLKLFVYTVVIFFVSLFIFGFLSNDPGRNPGRKE</sequence>
<comment type="function">
    <text evidence="1">One of the components of the core complex of photosystem II (PSII), required for its stability and/or assembly. PSII is a light-driven water:plastoquinone oxidoreductase that uses light energy to abstract electrons from H(2)O, generating O(2) and a proton gradient subsequently used for ATP formation. It consists of a core antenna complex that captures photons, and an electron transfer chain that converts photonic excitation into a charge separation.</text>
</comment>
<comment type="subunit">
    <text evidence="1">PSII is composed of 1 copy each of membrane proteins PsbA, PsbB, PsbC, PsbD, PsbE, PsbF, PsbH, PsbI, PsbJ, PsbK, PsbL, PsbM, PsbT, PsbX, PsbY, PsbZ, Psb30/Ycf12, at least 3 peripheral proteins of the oxygen-evolving complex and a large number of cofactors. It forms dimeric complexes.</text>
</comment>
<comment type="subcellular location">
    <subcellularLocation>
        <location evidence="1">Plastid</location>
        <location evidence="1">Chloroplast thylakoid membrane</location>
        <topology evidence="1">Single-pass membrane protein</topology>
    </subcellularLocation>
</comment>
<comment type="similarity">
    <text evidence="1">Belongs to the PsbI family.</text>
</comment>
<dbReference type="EMBL" id="AP009377">
    <property type="protein sequence ID" value="BAG16693.1"/>
    <property type="molecule type" value="Genomic_DNA"/>
</dbReference>
<dbReference type="RefSeq" id="YP_001806695.1">
    <property type="nucleotide sequence ID" value="NC_010548.1"/>
</dbReference>
<dbReference type="SMR" id="B1VKI2"/>
<dbReference type="GeneID" id="6166543"/>
<dbReference type="KEGG" id="cjf:6166543"/>
<dbReference type="OrthoDB" id="1855836at2759"/>
<dbReference type="GO" id="GO:0009535">
    <property type="term" value="C:chloroplast thylakoid membrane"/>
    <property type="evidence" value="ECO:0007669"/>
    <property type="project" value="UniProtKB-SubCell"/>
</dbReference>
<dbReference type="GO" id="GO:0009539">
    <property type="term" value="C:photosystem II reaction center"/>
    <property type="evidence" value="ECO:0007669"/>
    <property type="project" value="InterPro"/>
</dbReference>
<dbReference type="GO" id="GO:0015979">
    <property type="term" value="P:photosynthesis"/>
    <property type="evidence" value="ECO:0007669"/>
    <property type="project" value="UniProtKB-UniRule"/>
</dbReference>
<dbReference type="HAMAP" id="MF_01316">
    <property type="entry name" value="PSII_PsbI"/>
    <property type="match status" value="1"/>
</dbReference>
<dbReference type="InterPro" id="IPR003686">
    <property type="entry name" value="PSII_PsbI"/>
</dbReference>
<dbReference type="InterPro" id="IPR037271">
    <property type="entry name" value="PSII_PsbI_sf"/>
</dbReference>
<dbReference type="NCBIfam" id="NF002735">
    <property type="entry name" value="PRK02655.1"/>
    <property type="match status" value="1"/>
</dbReference>
<dbReference type="PANTHER" id="PTHR35772">
    <property type="entry name" value="PHOTOSYSTEM II REACTION CENTER PROTEIN I"/>
    <property type="match status" value="1"/>
</dbReference>
<dbReference type="PANTHER" id="PTHR35772:SF1">
    <property type="entry name" value="PHOTOSYSTEM II REACTION CENTER PROTEIN I"/>
    <property type="match status" value="1"/>
</dbReference>
<dbReference type="Pfam" id="PF02532">
    <property type="entry name" value="PsbI"/>
    <property type="match status" value="1"/>
</dbReference>
<dbReference type="SUPFAM" id="SSF161041">
    <property type="entry name" value="Photosystem II reaction center protein I, PsbI"/>
    <property type="match status" value="1"/>
</dbReference>
<feature type="chain" id="PRO_0000353223" description="Photosystem II reaction center protein I">
    <location>
        <begin position="1"/>
        <end position="36"/>
    </location>
</feature>
<feature type="transmembrane region" description="Helical" evidence="1">
    <location>
        <begin position="4"/>
        <end position="24"/>
    </location>
</feature>
<gene>
    <name evidence="1" type="primary">psbI</name>
</gene>
<proteinExistence type="inferred from homology"/>
<name>PSBI_CRYJA</name>
<geneLocation type="chloroplast"/>
<reference key="1">
    <citation type="journal article" date="2008" name="BMC Plant Biol.">
        <title>Complete nucleotide sequence of the Cryptomeria japonica D. Don. chloroplast genome and comparative chloroplast genomics: diversified genomic structure of coniferous species.</title>
        <authorList>
            <person name="Hirao T."/>
            <person name="Watanabe A."/>
            <person name="Kurita M."/>
            <person name="Kondo T."/>
            <person name="Takata K."/>
        </authorList>
    </citation>
    <scope>NUCLEOTIDE SEQUENCE [LARGE SCALE GENOMIC DNA]</scope>
</reference>
<protein>
    <recommendedName>
        <fullName evidence="1">Photosystem II reaction center protein I</fullName>
        <shortName evidence="1">PSII-I</shortName>
    </recommendedName>
    <alternativeName>
        <fullName evidence="1">PSII 4.8 kDa protein</fullName>
    </alternativeName>
</protein>
<keyword id="KW-0150">Chloroplast</keyword>
<keyword id="KW-0472">Membrane</keyword>
<keyword id="KW-0602">Photosynthesis</keyword>
<keyword id="KW-0604">Photosystem II</keyword>
<keyword id="KW-0934">Plastid</keyword>
<keyword id="KW-0674">Reaction center</keyword>
<keyword id="KW-0793">Thylakoid</keyword>
<keyword id="KW-0812">Transmembrane</keyword>
<keyword id="KW-1133">Transmembrane helix</keyword>